<keyword id="KW-1003">Cell membrane</keyword>
<keyword id="KW-1015">Disulfide bond</keyword>
<keyword id="KW-0297">G-protein coupled receptor</keyword>
<keyword id="KW-0325">Glycoprotein</keyword>
<keyword id="KW-0472">Membrane</keyword>
<keyword id="KW-0552">Olfaction</keyword>
<keyword id="KW-0675">Receptor</keyword>
<keyword id="KW-1185">Reference proteome</keyword>
<keyword id="KW-0716">Sensory transduction</keyword>
<keyword id="KW-0807">Transducer</keyword>
<keyword id="KW-0812">Transmembrane</keyword>
<keyword id="KW-1133">Transmembrane helix</keyword>
<feature type="chain" id="PRO_0000326026" description="Olfactory receptor 10D3">
    <location>
        <begin position="1"/>
        <end position="312"/>
    </location>
</feature>
<feature type="topological domain" description="Extracellular" evidence="1">
    <location>
        <begin position="1"/>
        <end position="26"/>
    </location>
</feature>
<feature type="transmembrane region" description="Helical; Name=1" evidence="1">
    <location>
        <begin position="27"/>
        <end position="47"/>
    </location>
</feature>
<feature type="topological domain" description="Cytoplasmic" evidence="1">
    <location>
        <begin position="48"/>
        <end position="57"/>
    </location>
</feature>
<feature type="transmembrane region" description="Helical; Name=2" evidence="1">
    <location>
        <begin position="58"/>
        <end position="78"/>
    </location>
</feature>
<feature type="topological domain" description="Extracellular" evidence="1">
    <location>
        <begin position="79"/>
        <end position="97"/>
    </location>
</feature>
<feature type="transmembrane region" description="Helical; Name=3" evidence="1">
    <location>
        <begin position="98"/>
        <end position="118"/>
    </location>
</feature>
<feature type="topological domain" description="Cytoplasmic" evidence="1">
    <location>
        <begin position="119"/>
        <end position="139"/>
    </location>
</feature>
<feature type="transmembrane region" description="Helical; Name=4" evidence="1">
    <location>
        <begin position="140"/>
        <end position="160"/>
    </location>
</feature>
<feature type="topological domain" description="Extracellular" evidence="1">
    <location>
        <begin position="161"/>
        <end position="197"/>
    </location>
</feature>
<feature type="transmembrane region" description="Helical; Name=5" evidence="1">
    <location>
        <begin position="198"/>
        <end position="218"/>
    </location>
</feature>
<feature type="topological domain" description="Cytoplasmic" evidence="1">
    <location>
        <begin position="219"/>
        <end position="239"/>
    </location>
</feature>
<feature type="transmembrane region" description="Helical; Name=6" evidence="1">
    <location>
        <begin position="240"/>
        <end position="260"/>
    </location>
</feature>
<feature type="topological domain" description="Extracellular" evidence="1">
    <location>
        <begin position="261"/>
        <end position="266"/>
    </location>
</feature>
<feature type="transmembrane region" description="Helical; Name=7" evidence="1">
    <location>
        <begin position="267"/>
        <end position="287"/>
    </location>
</feature>
<feature type="topological domain" description="Cytoplasmic" evidence="1">
    <location>
        <begin position="288"/>
        <end position="312"/>
    </location>
</feature>
<feature type="glycosylation site" description="N-linked (GlcNAc...) asparagine" evidence="1">
    <location>
        <position position="5"/>
    </location>
</feature>
<feature type="disulfide bond" evidence="2">
    <location>
        <begin position="97"/>
        <end position="179"/>
    </location>
</feature>
<gene>
    <name evidence="4" type="primary">Or10d3</name>
    <name evidence="4" type="synonym">Mor224-9</name>
    <name evidence="4" type="synonym">Olfr958</name>
</gene>
<sequence>MEIKNCSVVTEFILLGIPHTEGFETLLFVLFLPFYACTLVGNVSILVAVISSTRLHTPMYFFLGNLSVFDMGFSSVTCPKMLFYLMGLSRLISYQDCVSQLFFFHFLGSIECFLYTVMAYDRFAAICHPLRYSVIMNSKICVALAVGTWLLGCFHSSVLTSLTFTLPYCGPNEVDHFFCDIPAILPLASADTSLAQRVSFTNVGLVSLVCFLLILLSYTRITISILSIQSTEGRQRAFSTCSAHLIAILCAYGPIITIYLQPTPNPMLGTVVQILMNLVGPMLNPLIYTLRNKEVKIALKKILHGKGSVSEG</sequence>
<evidence type="ECO:0000255" key="1"/>
<evidence type="ECO:0000255" key="2">
    <source>
        <dbReference type="PROSITE-ProRule" id="PRU00521"/>
    </source>
</evidence>
<evidence type="ECO:0000305" key="3"/>
<evidence type="ECO:0000312" key="4">
    <source>
        <dbReference type="MGI" id="MGI:3030792"/>
    </source>
</evidence>
<name>O10D3_MOUSE</name>
<protein>
    <recommendedName>
        <fullName evidence="3">Olfactory receptor 10D3</fullName>
    </recommendedName>
    <alternativeName>
        <fullName>Olfactory receptor 224-9</fullName>
    </alternativeName>
    <alternativeName>
        <fullName>Olfactory receptor 958</fullName>
    </alternativeName>
</protein>
<dbReference type="EMBL" id="AY073763">
    <property type="protein sequence ID" value="AAL61426.1"/>
    <property type="molecule type" value="Genomic_DNA"/>
</dbReference>
<dbReference type="EMBL" id="AY318149">
    <property type="protein sequence ID" value="AAP71421.1"/>
    <property type="molecule type" value="Genomic_DNA"/>
</dbReference>
<dbReference type="EMBL" id="BC148230">
    <property type="protein sequence ID" value="AAI48231.1"/>
    <property type="molecule type" value="mRNA"/>
</dbReference>
<dbReference type="CCDS" id="CCDS23050.1"/>
<dbReference type="RefSeq" id="NP_666442.1">
    <property type="nucleotide sequence ID" value="NM_146330.1"/>
</dbReference>
<dbReference type="SMR" id="Q8VEY3"/>
<dbReference type="FunCoup" id="Q8VEY3">
    <property type="interactions" value="1400"/>
</dbReference>
<dbReference type="STRING" id="10090.ENSMUSP00000149788"/>
<dbReference type="GlyCosmos" id="Q8VEY3">
    <property type="glycosylation" value="1 site, No reported glycans"/>
</dbReference>
<dbReference type="GlyGen" id="Q8VEY3">
    <property type="glycosylation" value="1 site"/>
</dbReference>
<dbReference type="PaxDb" id="10090-ENSMUSP00000049930"/>
<dbReference type="Antibodypedia" id="65551">
    <property type="antibodies" value="7 antibodies from 7 providers"/>
</dbReference>
<dbReference type="DNASU" id="258327"/>
<dbReference type="Ensembl" id="ENSMUST00000062545.3">
    <property type="protein sequence ID" value="ENSMUSP00000049930.3"/>
    <property type="gene ID" value="ENSMUSG00000050853.4"/>
</dbReference>
<dbReference type="Ensembl" id="ENSMUST00000215505.2">
    <property type="protein sequence ID" value="ENSMUSP00000149018.2"/>
    <property type="gene ID" value="ENSMUSG00000050853.4"/>
</dbReference>
<dbReference type="Ensembl" id="ENSMUST00000217227.2">
    <property type="protein sequence ID" value="ENSMUSP00000149788.2"/>
    <property type="gene ID" value="ENSMUSG00000050853.4"/>
</dbReference>
<dbReference type="GeneID" id="258327"/>
<dbReference type="KEGG" id="mmu:258327"/>
<dbReference type="UCSC" id="uc009oyc.1">
    <property type="organism name" value="mouse"/>
</dbReference>
<dbReference type="AGR" id="MGI:3030792"/>
<dbReference type="CTD" id="26497"/>
<dbReference type="MGI" id="MGI:3030792">
    <property type="gene designation" value="Or10d3"/>
</dbReference>
<dbReference type="VEuPathDB" id="HostDB:ENSMUSG00000050853"/>
<dbReference type="eggNOG" id="ENOG502SH9P">
    <property type="taxonomic scope" value="Eukaryota"/>
</dbReference>
<dbReference type="GeneTree" id="ENSGT01050000244869"/>
<dbReference type="HOGENOM" id="CLU_012526_8_1_1"/>
<dbReference type="InParanoid" id="Q8VEY3"/>
<dbReference type="OMA" id="FALPYCG"/>
<dbReference type="OrthoDB" id="5975390at2759"/>
<dbReference type="PhylomeDB" id="Q8VEY3"/>
<dbReference type="TreeFam" id="TF336512"/>
<dbReference type="BioGRID-ORCS" id="258327">
    <property type="hits" value="2 hits in 72 CRISPR screens"/>
</dbReference>
<dbReference type="PRO" id="PR:Q8VEY3"/>
<dbReference type="Proteomes" id="UP000000589">
    <property type="component" value="Chromosome 9"/>
</dbReference>
<dbReference type="RNAct" id="Q8VEY3">
    <property type="molecule type" value="protein"/>
</dbReference>
<dbReference type="Bgee" id="ENSMUSG00000050853">
    <property type="expression patterns" value="Expressed in respiratory tract epithelium and 4 other cell types or tissues"/>
</dbReference>
<dbReference type="GO" id="GO:0016020">
    <property type="term" value="C:membrane"/>
    <property type="evidence" value="ECO:0000247"/>
    <property type="project" value="MGI"/>
</dbReference>
<dbReference type="GO" id="GO:0005886">
    <property type="term" value="C:plasma membrane"/>
    <property type="evidence" value="ECO:0007669"/>
    <property type="project" value="UniProtKB-SubCell"/>
</dbReference>
<dbReference type="GO" id="GO:0004930">
    <property type="term" value="F:G protein-coupled receptor activity"/>
    <property type="evidence" value="ECO:0007669"/>
    <property type="project" value="UniProtKB-KW"/>
</dbReference>
<dbReference type="GO" id="GO:0004984">
    <property type="term" value="F:olfactory receptor activity"/>
    <property type="evidence" value="ECO:0000314"/>
    <property type="project" value="MGI"/>
</dbReference>
<dbReference type="GO" id="GO:0007186">
    <property type="term" value="P:G protein-coupled receptor signaling pathway"/>
    <property type="evidence" value="ECO:0000247"/>
    <property type="project" value="MGI"/>
</dbReference>
<dbReference type="GO" id="GO:0007608">
    <property type="term" value="P:sensory perception of smell"/>
    <property type="evidence" value="ECO:0000247"/>
    <property type="project" value="MGI"/>
</dbReference>
<dbReference type="CDD" id="cd15228">
    <property type="entry name" value="7tmA_OR10D-like"/>
    <property type="match status" value="1"/>
</dbReference>
<dbReference type="FunFam" id="1.20.1070.10:FF:000001">
    <property type="entry name" value="Olfactory receptor"/>
    <property type="match status" value="1"/>
</dbReference>
<dbReference type="Gene3D" id="1.20.1070.10">
    <property type="entry name" value="Rhodopsin 7-helix transmembrane proteins"/>
    <property type="match status" value="1"/>
</dbReference>
<dbReference type="InterPro" id="IPR000276">
    <property type="entry name" value="GPCR_Rhodpsn"/>
</dbReference>
<dbReference type="InterPro" id="IPR017452">
    <property type="entry name" value="GPCR_Rhodpsn_7TM"/>
</dbReference>
<dbReference type="InterPro" id="IPR000725">
    <property type="entry name" value="Olfact_rcpt"/>
</dbReference>
<dbReference type="PANTHER" id="PTHR26453">
    <property type="entry name" value="OLFACTORY RECEPTOR"/>
    <property type="match status" value="1"/>
</dbReference>
<dbReference type="Pfam" id="PF13853">
    <property type="entry name" value="7tm_4"/>
    <property type="match status" value="1"/>
</dbReference>
<dbReference type="PRINTS" id="PR00237">
    <property type="entry name" value="GPCRRHODOPSN"/>
</dbReference>
<dbReference type="PRINTS" id="PR00245">
    <property type="entry name" value="OLFACTORYR"/>
</dbReference>
<dbReference type="SUPFAM" id="SSF81321">
    <property type="entry name" value="Family A G protein-coupled receptor-like"/>
    <property type="match status" value="1"/>
</dbReference>
<dbReference type="PROSITE" id="PS50262">
    <property type="entry name" value="G_PROTEIN_RECEP_F1_2"/>
    <property type="match status" value="1"/>
</dbReference>
<comment type="function">
    <text>Potential odorant receptor.</text>
</comment>
<comment type="subcellular location">
    <subcellularLocation>
        <location evidence="3">Cell membrane</location>
        <topology evidence="1">Multi-pass membrane protein</topology>
    </subcellularLocation>
</comment>
<comment type="similarity">
    <text evidence="2">Belongs to the G-protein coupled receptor 1 family.</text>
</comment>
<organism>
    <name type="scientific">Mus musculus</name>
    <name type="common">Mouse</name>
    <dbReference type="NCBI Taxonomy" id="10090"/>
    <lineage>
        <taxon>Eukaryota</taxon>
        <taxon>Metazoa</taxon>
        <taxon>Chordata</taxon>
        <taxon>Craniata</taxon>
        <taxon>Vertebrata</taxon>
        <taxon>Euteleostomi</taxon>
        <taxon>Mammalia</taxon>
        <taxon>Eutheria</taxon>
        <taxon>Euarchontoglires</taxon>
        <taxon>Glires</taxon>
        <taxon>Rodentia</taxon>
        <taxon>Myomorpha</taxon>
        <taxon>Muroidea</taxon>
        <taxon>Muridae</taxon>
        <taxon>Murinae</taxon>
        <taxon>Mus</taxon>
        <taxon>Mus</taxon>
    </lineage>
</organism>
<proteinExistence type="evidence at transcript level"/>
<reference key="1">
    <citation type="journal article" date="2002" name="Nat. Neurosci.">
        <title>The olfactory receptor gene superfamily of the mouse.</title>
        <authorList>
            <person name="Zhang X."/>
            <person name="Firestein S."/>
        </authorList>
    </citation>
    <scope>NUCLEOTIDE SEQUENCE [GENOMIC DNA]</scope>
</reference>
<reference key="2">
    <citation type="journal article" date="2002" name="Hum. Mol. Genet.">
        <title>Different evolutionary processes shaped the mouse and human olfactory receptor gene families.</title>
        <authorList>
            <person name="Young J.M."/>
            <person name="Friedman C."/>
            <person name="Williams E.M."/>
            <person name="Ross J.A."/>
            <person name="Tonnes-Priddy L."/>
            <person name="Trask B.J."/>
        </authorList>
    </citation>
    <scope>NUCLEOTIDE SEQUENCE [GENOMIC DNA]</scope>
</reference>
<reference key="3">
    <citation type="journal article" date="2002" name="Hum. Mol. Genet.">
        <authorList>
            <person name="Young J.M."/>
            <person name="Friedman C."/>
            <person name="Williams E.M."/>
            <person name="Ross J.A."/>
            <person name="Tonnes-Priddy L."/>
            <person name="Trask B.J."/>
        </authorList>
    </citation>
    <scope>ERRATUM OF PUBMED:11875048</scope>
</reference>
<reference key="4">
    <citation type="journal article" date="2003" name="Genome Biol.">
        <title>Odorant receptor expressed sequence tags demonstrate olfactory expression of over 400 genes, extensive alternate splicing and unequal expression levels.</title>
        <authorList>
            <person name="Young J.M."/>
            <person name="Shykind B.M."/>
            <person name="Lane R.P."/>
            <person name="Tonnes-Priddy L."/>
            <person name="Ross J.A."/>
            <person name="Walker M."/>
            <person name="Williams E.M."/>
            <person name="Trask B.J."/>
        </authorList>
    </citation>
    <scope>NUCLEOTIDE SEQUENCE [GENOMIC DNA]</scope>
</reference>
<reference key="5">
    <citation type="journal article" date="2004" name="Genome Res.">
        <title>The status, quality, and expansion of the NIH full-length cDNA project: the Mammalian Gene Collection (MGC).</title>
        <authorList>
            <consortium name="The MGC Project Team"/>
        </authorList>
    </citation>
    <scope>NUCLEOTIDE SEQUENCE [LARGE SCALE MRNA]</scope>
</reference>
<accession>Q8VEY3</accession>